<dbReference type="EC" id="2.7.1.53"/>
<dbReference type="EMBL" id="AE004439">
    <property type="protein sequence ID" value="AAK03331.1"/>
    <property type="molecule type" value="Genomic_DNA"/>
</dbReference>
<dbReference type="RefSeq" id="WP_010907092.1">
    <property type="nucleotide sequence ID" value="NC_002663.1"/>
</dbReference>
<dbReference type="SMR" id="P57928"/>
<dbReference type="STRING" id="272843.PM1247"/>
<dbReference type="EnsemblBacteria" id="AAK03331">
    <property type="protein sequence ID" value="AAK03331"/>
    <property type="gene ID" value="PM1247"/>
</dbReference>
<dbReference type="KEGG" id="pmu:PM1247"/>
<dbReference type="PATRIC" id="fig|272843.6.peg.1257"/>
<dbReference type="HOGENOM" id="CLU_009281_3_1_6"/>
<dbReference type="OrthoDB" id="9805576at2"/>
<dbReference type="Proteomes" id="UP000000809">
    <property type="component" value="Chromosome"/>
</dbReference>
<dbReference type="GO" id="GO:0005524">
    <property type="term" value="F:ATP binding"/>
    <property type="evidence" value="ECO:0007669"/>
    <property type="project" value="UniProtKB-KW"/>
</dbReference>
<dbReference type="GO" id="GO:0008744">
    <property type="term" value="F:L-xylulokinase activity"/>
    <property type="evidence" value="ECO:0007669"/>
    <property type="project" value="UniProtKB-EC"/>
</dbReference>
<dbReference type="GO" id="GO:0016773">
    <property type="term" value="F:phosphotransferase activity, alcohol group as acceptor"/>
    <property type="evidence" value="ECO:0007669"/>
    <property type="project" value="InterPro"/>
</dbReference>
<dbReference type="CDD" id="cd07802">
    <property type="entry name" value="ASKHA_NBD_FGGY_EcLyxK-like"/>
    <property type="match status" value="1"/>
</dbReference>
<dbReference type="Gene3D" id="3.30.420.40">
    <property type="match status" value="2"/>
</dbReference>
<dbReference type="InterPro" id="IPR043129">
    <property type="entry name" value="ATPase_NBD"/>
</dbReference>
<dbReference type="InterPro" id="IPR000577">
    <property type="entry name" value="Carb_kinase_FGGY"/>
</dbReference>
<dbReference type="InterPro" id="IPR018483">
    <property type="entry name" value="Carb_kinase_FGGY_CS"/>
</dbReference>
<dbReference type="InterPro" id="IPR018485">
    <property type="entry name" value="FGGY_C"/>
</dbReference>
<dbReference type="InterPro" id="IPR050406">
    <property type="entry name" value="FGGY_Carb_Kinase"/>
</dbReference>
<dbReference type="InterPro" id="IPR018484">
    <property type="entry name" value="FGGY_N"/>
</dbReference>
<dbReference type="PANTHER" id="PTHR43095:SF3">
    <property type="entry name" value="L-XYLULOSE_3-KETO-L-GULONATE KINASE"/>
    <property type="match status" value="1"/>
</dbReference>
<dbReference type="PANTHER" id="PTHR43095">
    <property type="entry name" value="SUGAR KINASE"/>
    <property type="match status" value="1"/>
</dbReference>
<dbReference type="Pfam" id="PF02782">
    <property type="entry name" value="FGGY_C"/>
    <property type="match status" value="1"/>
</dbReference>
<dbReference type="Pfam" id="PF00370">
    <property type="entry name" value="FGGY_N"/>
    <property type="match status" value="1"/>
</dbReference>
<dbReference type="PIRSF" id="PIRSF000538">
    <property type="entry name" value="GlpK"/>
    <property type="match status" value="1"/>
</dbReference>
<dbReference type="SUPFAM" id="SSF53067">
    <property type="entry name" value="Actin-like ATPase domain"/>
    <property type="match status" value="2"/>
</dbReference>
<dbReference type="PROSITE" id="PS00445">
    <property type="entry name" value="FGGY_KINASES_2"/>
    <property type="match status" value="1"/>
</dbReference>
<accession>P57928</accession>
<organism>
    <name type="scientific">Pasteurella multocida (strain Pm70)</name>
    <dbReference type="NCBI Taxonomy" id="272843"/>
    <lineage>
        <taxon>Bacteria</taxon>
        <taxon>Pseudomonadati</taxon>
        <taxon>Pseudomonadota</taxon>
        <taxon>Gammaproteobacteria</taxon>
        <taxon>Pasteurellales</taxon>
        <taxon>Pasteurellaceae</taxon>
        <taxon>Pasteurella</taxon>
    </lineage>
</organism>
<feature type="chain" id="PRO_0000059562" description="Probable L-xylulose kinase">
    <location>
        <begin position="1"/>
        <end position="483"/>
    </location>
</feature>
<keyword id="KW-0067">ATP-binding</keyword>
<keyword id="KW-0418">Kinase</keyword>
<keyword id="KW-0547">Nucleotide-binding</keyword>
<keyword id="KW-1185">Reference proteome</keyword>
<keyword id="KW-0808">Transferase</keyword>
<proteinExistence type="inferred from homology"/>
<protein>
    <recommendedName>
        <fullName>Probable L-xylulose kinase</fullName>
        <shortName>L-xylulokinase</shortName>
        <ecNumber>2.7.1.53</ecNumber>
    </recommendedName>
</protein>
<gene>
    <name type="primary">lyx</name>
    <name type="ordered locus">PM1247</name>
</gene>
<sequence length="483" mass="53673">MNYYLGIDCGGTFIKAALFDKTGKMFSCVRENVQVISEQAGYAERDMDELWQIFARVIRQTIERSQVSPQHIKGIGISAQGKGAFLLDQENKPLGRGILSSDQRALTLVKQWQEQGIPEQLYPHTRQTLWTGHPVSILRWLKEHEPERYQRIGSILMSHDYLRFCLTGELHCEETNISESNLYNIHSGQYDPKLAELLGLEGIIAKLPPVIAANQIAGYVTPKAAELTGLAVGTAVVGGLFDVVSTALCAGLDDETKLNAVLGTWSVVSGVTQHIDQQQTLPFVYGCYAEAGKFIVHEASPTSAGNLEWFVKQWHLDYAHINQHVASLEPASSSVLFVPFLYGSNAGLGMQACFYGMQAHHTQAHLLQAIYEGVLFSLMHHLERMRKRFPQANLLRVTGGPTKSPIWLQMLADFTGMRLEIPQIEETGCLGAALMAMQGVNESADVFQAQSMLHVEPNPAYFAAYQAKYQRYQQLTTALKAML</sequence>
<name>LYXK_PASMU</name>
<comment type="catalytic activity">
    <reaction>
        <text>L-xylulose + ATP = L-xylulose 5-phosphate + ADP + H(+)</text>
        <dbReference type="Rhea" id="RHEA:18869"/>
        <dbReference type="ChEBI" id="CHEBI:15378"/>
        <dbReference type="ChEBI" id="CHEBI:17399"/>
        <dbReference type="ChEBI" id="CHEBI:30616"/>
        <dbReference type="ChEBI" id="CHEBI:57829"/>
        <dbReference type="ChEBI" id="CHEBI:456216"/>
        <dbReference type="EC" id="2.7.1.53"/>
    </reaction>
</comment>
<comment type="subunit">
    <text evidence="1">Homodimer.</text>
</comment>
<comment type="similarity">
    <text evidence="2">Belongs to the FGGY kinase family.</text>
</comment>
<reference key="1">
    <citation type="journal article" date="2001" name="Proc. Natl. Acad. Sci. U.S.A.">
        <title>Complete genomic sequence of Pasteurella multocida Pm70.</title>
        <authorList>
            <person name="May B.J."/>
            <person name="Zhang Q."/>
            <person name="Li L.L."/>
            <person name="Paustian M.L."/>
            <person name="Whittam T.S."/>
            <person name="Kapur V."/>
        </authorList>
    </citation>
    <scope>NUCLEOTIDE SEQUENCE [LARGE SCALE GENOMIC DNA]</scope>
    <source>
        <strain>Pm70</strain>
    </source>
</reference>
<evidence type="ECO:0000250" key="1"/>
<evidence type="ECO:0000305" key="2"/>